<dbReference type="EMBL" id="D84432">
    <property type="protein sequence ID" value="BAA12620.1"/>
    <property type="molecule type" value="Genomic_DNA"/>
</dbReference>
<dbReference type="EMBL" id="AL009126">
    <property type="protein sequence ID" value="CAB14313.2"/>
    <property type="molecule type" value="Genomic_DNA"/>
</dbReference>
<dbReference type="PIR" id="F69964">
    <property type="entry name" value="F69964"/>
</dbReference>
<dbReference type="RefSeq" id="NP_390262.2">
    <property type="nucleotide sequence ID" value="NC_000964.3"/>
</dbReference>
<dbReference type="RefSeq" id="WP_004398867.1">
    <property type="nucleotide sequence ID" value="NZ_OZ025638.1"/>
</dbReference>
<dbReference type="SMR" id="P54551"/>
<dbReference type="FunCoup" id="P54551">
    <property type="interactions" value="36"/>
</dbReference>
<dbReference type="STRING" id="224308.BSU23810"/>
<dbReference type="PaxDb" id="224308-BSU23810"/>
<dbReference type="EnsemblBacteria" id="CAB14313">
    <property type="protein sequence ID" value="CAB14313"/>
    <property type="gene ID" value="BSU_23810"/>
</dbReference>
<dbReference type="GeneID" id="938696"/>
<dbReference type="KEGG" id="bsu:BSU23810"/>
<dbReference type="PATRIC" id="fig|224308.179.peg.2594"/>
<dbReference type="eggNOG" id="COG4187">
    <property type="taxonomic scope" value="Bacteria"/>
</dbReference>
<dbReference type="InParanoid" id="P54551"/>
<dbReference type="OrthoDB" id="9815360at2"/>
<dbReference type="PhylomeDB" id="P54551"/>
<dbReference type="BioCyc" id="BSUB:BSU23810-MONOMER"/>
<dbReference type="Proteomes" id="UP000001570">
    <property type="component" value="Chromosome"/>
</dbReference>
<dbReference type="GO" id="GO:0016787">
    <property type="term" value="F:hydrolase activity"/>
    <property type="evidence" value="ECO:0007669"/>
    <property type="project" value="InterPro"/>
</dbReference>
<dbReference type="CDD" id="cd05654">
    <property type="entry name" value="M20_ArgE_RocB"/>
    <property type="match status" value="1"/>
</dbReference>
<dbReference type="FunFam" id="3.40.630.10:FF:000100">
    <property type="entry name" value="Arginine utilization protein RocB"/>
    <property type="match status" value="1"/>
</dbReference>
<dbReference type="Gene3D" id="3.40.630.10">
    <property type="entry name" value="Zn peptidases"/>
    <property type="match status" value="1"/>
</dbReference>
<dbReference type="InterPro" id="IPR002933">
    <property type="entry name" value="Peptidase_M20"/>
</dbReference>
<dbReference type="InterPro" id="IPR050072">
    <property type="entry name" value="Peptidase_M20A"/>
</dbReference>
<dbReference type="InterPro" id="IPR012166">
    <property type="entry name" value="Uncharacterised_RocB"/>
</dbReference>
<dbReference type="PANTHER" id="PTHR43808">
    <property type="entry name" value="ACETYLORNITHINE DEACETYLASE"/>
    <property type="match status" value="1"/>
</dbReference>
<dbReference type="PANTHER" id="PTHR43808:SF27">
    <property type="entry name" value="PROTEIN ROCB"/>
    <property type="match status" value="1"/>
</dbReference>
<dbReference type="Pfam" id="PF01546">
    <property type="entry name" value="Peptidase_M20"/>
    <property type="match status" value="1"/>
</dbReference>
<dbReference type="PIRSF" id="PIRSF010386">
    <property type="entry name" value="RocB"/>
    <property type="match status" value="1"/>
</dbReference>
<dbReference type="SUPFAM" id="SSF53187">
    <property type="entry name" value="Zn-dependent exopeptidases"/>
    <property type="match status" value="1"/>
</dbReference>
<protein>
    <recommendedName>
        <fullName>Uncharacterized protein YqjN</fullName>
    </recommendedName>
</protein>
<sequence length="547" mass="61854">MNWQTKDELLALLTSLVQYESITGSKGEVALAEYLYFILKDKPYFQKHPDDVTLHPMDDGRSFLTALVKKKNVKKTVLLLSHFDVVDIEDYGEFKHMACKPAELLSSFLEKKELLPERVRRDAESGDWLFGRGTMDMKAGLCIQLSMLERAMNGHFEGNLLLITVPDEEVNSRGMIEAVPALKEMEKKHDITLTACLNAEPMFEKFPGDQQQYFYTGSIGKVLAGFFCKGIETHVGEPFSGLNANLMVSEINRLLELNADYCEKVDGEVTPPPVNLMQKDLKEAYSVQTPHTAVTLFNVLSMKRSASELHQMLLKTAEQAAEEIMSNVRKKTQDFQQFEPFQPIERDVTVLTFDELVSRAKKRAGISETERALNYAFANRGELGDRDFSTKIVSELASLCKEDAPLIVLFYSPPLYPAVSSKDDQLIRNTADQIKHYAAERYGIALREVQYFPGLSDLSYLQLEKQEVDAYTSNMPLFNRGYSLPSGKNQALYVPVLNVGPAGKDPHKWTERLYMPYSFEVLPDLLSFTISALLKQSESAGQLLREK</sequence>
<name>YQJN_BACSU</name>
<comment type="similarity">
    <text evidence="1">To B.subtilis RocB.</text>
</comment>
<gene>
    <name type="primary">yqjN</name>
    <name type="ordered locus">BSU23810</name>
</gene>
<organism>
    <name type="scientific">Bacillus subtilis (strain 168)</name>
    <dbReference type="NCBI Taxonomy" id="224308"/>
    <lineage>
        <taxon>Bacteria</taxon>
        <taxon>Bacillati</taxon>
        <taxon>Bacillota</taxon>
        <taxon>Bacilli</taxon>
        <taxon>Bacillales</taxon>
        <taxon>Bacillaceae</taxon>
        <taxon>Bacillus</taxon>
    </lineage>
</organism>
<accession>P54551</accession>
<evidence type="ECO:0000305" key="1"/>
<keyword id="KW-1185">Reference proteome</keyword>
<proteinExistence type="predicted"/>
<feature type="chain" id="PRO_0000049832" description="Uncharacterized protein YqjN">
    <location>
        <begin position="1"/>
        <end position="547"/>
    </location>
</feature>
<feature type="sequence conflict" description="In Ref. 1; BAA12620." evidence="1" ref="1">
    <original>L</original>
    <variation>P</variation>
    <location>
        <position position="54"/>
    </location>
</feature>
<reference key="1">
    <citation type="journal article" date="1996" name="Microbiology">
        <title>Systematic sequencing of the 283 kb 210 degrees-232 degrees region of the Bacillus subtilis genome containing the skin element and many sporulation genes.</title>
        <authorList>
            <person name="Mizuno M."/>
            <person name="Masuda S."/>
            <person name="Takemaru K."/>
            <person name="Hosono S."/>
            <person name="Sato T."/>
            <person name="Takeuchi M."/>
            <person name="Kobayashi Y."/>
        </authorList>
    </citation>
    <scope>NUCLEOTIDE SEQUENCE [GENOMIC DNA]</scope>
    <source>
        <strain>168 / JH642</strain>
    </source>
</reference>
<reference key="2">
    <citation type="journal article" date="1997" name="Nature">
        <title>The complete genome sequence of the Gram-positive bacterium Bacillus subtilis.</title>
        <authorList>
            <person name="Kunst F."/>
            <person name="Ogasawara N."/>
            <person name="Moszer I."/>
            <person name="Albertini A.M."/>
            <person name="Alloni G."/>
            <person name="Azevedo V."/>
            <person name="Bertero M.G."/>
            <person name="Bessieres P."/>
            <person name="Bolotin A."/>
            <person name="Borchert S."/>
            <person name="Borriss R."/>
            <person name="Boursier L."/>
            <person name="Brans A."/>
            <person name="Braun M."/>
            <person name="Brignell S.C."/>
            <person name="Bron S."/>
            <person name="Brouillet S."/>
            <person name="Bruschi C.V."/>
            <person name="Caldwell B."/>
            <person name="Capuano V."/>
            <person name="Carter N.M."/>
            <person name="Choi S.-K."/>
            <person name="Codani J.-J."/>
            <person name="Connerton I.F."/>
            <person name="Cummings N.J."/>
            <person name="Daniel R.A."/>
            <person name="Denizot F."/>
            <person name="Devine K.M."/>
            <person name="Duesterhoeft A."/>
            <person name="Ehrlich S.D."/>
            <person name="Emmerson P.T."/>
            <person name="Entian K.-D."/>
            <person name="Errington J."/>
            <person name="Fabret C."/>
            <person name="Ferrari E."/>
            <person name="Foulger D."/>
            <person name="Fritz C."/>
            <person name="Fujita M."/>
            <person name="Fujita Y."/>
            <person name="Fuma S."/>
            <person name="Galizzi A."/>
            <person name="Galleron N."/>
            <person name="Ghim S.-Y."/>
            <person name="Glaser P."/>
            <person name="Goffeau A."/>
            <person name="Golightly E.J."/>
            <person name="Grandi G."/>
            <person name="Guiseppi G."/>
            <person name="Guy B.J."/>
            <person name="Haga K."/>
            <person name="Haiech J."/>
            <person name="Harwood C.R."/>
            <person name="Henaut A."/>
            <person name="Hilbert H."/>
            <person name="Holsappel S."/>
            <person name="Hosono S."/>
            <person name="Hullo M.-F."/>
            <person name="Itaya M."/>
            <person name="Jones L.-M."/>
            <person name="Joris B."/>
            <person name="Karamata D."/>
            <person name="Kasahara Y."/>
            <person name="Klaerr-Blanchard M."/>
            <person name="Klein C."/>
            <person name="Kobayashi Y."/>
            <person name="Koetter P."/>
            <person name="Koningstein G."/>
            <person name="Krogh S."/>
            <person name="Kumano M."/>
            <person name="Kurita K."/>
            <person name="Lapidus A."/>
            <person name="Lardinois S."/>
            <person name="Lauber J."/>
            <person name="Lazarevic V."/>
            <person name="Lee S.-M."/>
            <person name="Levine A."/>
            <person name="Liu H."/>
            <person name="Masuda S."/>
            <person name="Mauel C."/>
            <person name="Medigue C."/>
            <person name="Medina N."/>
            <person name="Mellado R.P."/>
            <person name="Mizuno M."/>
            <person name="Moestl D."/>
            <person name="Nakai S."/>
            <person name="Noback M."/>
            <person name="Noone D."/>
            <person name="O'Reilly M."/>
            <person name="Ogawa K."/>
            <person name="Ogiwara A."/>
            <person name="Oudega B."/>
            <person name="Park S.-H."/>
            <person name="Parro V."/>
            <person name="Pohl T.M."/>
            <person name="Portetelle D."/>
            <person name="Porwollik S."/>
            <person name="Prescott A.M."/>
            <person name="Presecan E."/>
            <person name="Pujic P."/>
            <person name="Purnelle B."/>
            <person name="Rapoport G."/>
            <person name="Rey M."/>
            <person name="Reynolds S."/>
            <person name="Rieger M."/>
            <person name="Rivolta C."/>
            <person name="Rocha E."/>
            <person name="Roche B."/>
            <person name="Rose M."/>
            <person name="Sadaie Y."/>
            <person name="Sato T."/>
            <person name="Scanlan E."/>
            <person name="Schleich S."/>
            <person name="Schroeter R."/>
            <person name="Scoffone F."/>
            <person name="Sekiguchi J."/>
            <person name="Sekowska A."/>
            <person name="Seror S.J."/>
            <person name="Serror P."/>
            <person name="Shin B.-S."/>
            <person name="Soldo B."/>
            <person name="Sorokin A."/>
            <person name="Tacconi E."/>
            <person name="Takagi T."/>
            <person name="Takahashi H."/>
            <person name="Takemaru K."/>
            <person name="Takeuchi M."/>
            <person name="Tamakoshi A."/>
            <person name="Tanaka T."/>
            <person name="Terpstra P."/>
            <person name="Tognoni A."/>
            <person name="Tosato V."/>
            <person name="Uchiyama S."/>
            <person name="Vandenbol M."/>
            <person name="Vannier F."/>
            <person name="Vassarotti A."/>
            <person name="Viari A."/>
            <person name="Wambutt R."/>
            <person name="Wedler E."/>
            <person name="Wedler H."/>
            <person name="Weitzenegger T."/>
            <person name="Winters P."/>
            <person name="Wipat A."/>
            <person name="Yamamoto H."/>
            <person name="Yamane K."/>
            <person name="Yasumoto K."/>
            <person name="Yata K."/>
            <person name="Yoshida K."/>
            <person name="Yoshikawa H.-F."/>
            <person name="Zumstein E."/>
            <person name="Yoshikawa H."/>
            <person name="Danchin A."/>
        </authorList>
    </citation>
    <scope>NUCLEOTIDE SEQUENCE [LARGE SCALE GENOMIC DNA]</scope>
    <source>
        <strain>168</strain>
    </source>
</reference>
<reference key="3">
    <citation type="journal article" date="2009" name="Microbiology">
        <title>From a consortium sequence to a unified sequence: the Bacillus subtilis 168 reference genome a decade later.</title>
        <authorList>
            <person name="Barbe V."/>
            <person name="Cruveiller S."/>
            <person name="Kunst F."/>
            <person name="Lenoble P."/>
            <person name="Meurice G."/>
            <person name="Sekowska A."/>
            <person name="Vallenet D."/>
            <person name="Wang T."/>
            <person name="Moszer I."/>
            <person name="Medigue C."/>
            <person name="Danchin A."/>
        </authorList>
    </citation>
    <scope>SEQUENCE REVISION TO 54</scope>
</reference>